<proteinExistence type="inferred from homology"/>
<keyword id="KW-0963">Cytoplasm</keyword>
<keyword id="KW-0489">Methyltransferase</keyword>
<keyword id="KW-1185">Reference proteome</keyword>
<keyword id="KW-0949">S-adenosyl-L-methionine</keyword>
<keyword id="KW-0808">Transferase</keyword>
<keyword id="KW-0819">tRNA processing</keyword>
<feature type="chain" id="PRO_0000387370" description="tRNA1(Val) (adenine(37)-N6)-methyltransferase">
    <location>
        <begin position="1"/>
        <end position="245"/>
    </location>
</feature>
<evidence type="ECO:0000255" key="1">
    <source>
        <dbReference type="HAMAP-Rule" id="MF_01872"/>
    </source>
</evidence>
<evidence type="ECO:0000305" key="2"/>
<name>TRMN6_ECOK1</name>
<comment type="function">
    <text evidence="1">Specifically methylates the adenine in position 37 of tRNA(1)(Val) (anticodon cmo5UAC).</text>
</comment>
<comment type="catalytic activity">
    <reaction evidence="1">
        <text>adenosine(37) in tRNA1(Val) + S-adenosyl-L-methionine = N(6)-methyladenosine(37) in tRNA1(Val) + S-adenosyl-L-homocysteine + H(+)</text>
        <dbReference type="Rhea" id="RHEA:43160"/>
        <dbReference type="Rhea" id="RHEA-COMP:10369"/>
        <dbReference type="Rhea" id="RHEA-COMP:10370"/>
        <dbReference type="ChEBI" id="CHEBI:15378"/>
        <dbReference type="ChEBI" id="CHEBI:57856"/>
        <dbReference type="ChEBI" id="CHEBI:59789"/>
        <dbReference type="ChEBI" id="CHEBI:74411"/>
        <dbReference type="ChEBI" id="CHEBI:74449"/>
        <dbReference type="EC" id="2.1.1.223"/>
    </reaction>
</comment>
<comment type="subcellular location">
    <subcellularLocation>
        <location evidence="1">Cytoplasm</location>
    </subcellularLocation>
</comment>
<comment type="similarity">
    <text evidence="1">Belongs to the methyltransferase superfamily. tRNA (adenine-N(6)-)-methyltransferase family.</text>
</comment>
<comment type="sequence caution" evidence="2">
    <conflict type="erroneous initiation">
        <sequence resource="EMBL-CDS" id="ABJ01995"/>
    </conflict>
</comment>
<protein>
    <recommendedName>
        <fullName evidence="1">tRNA1(Val) (adenine(37)-N6)-methyltransferase</fullName>
        <ecNumber evidence="1">2.1.1.223</ecNumber>
    </recommendedName>
    <alternativeName>
        <fullName evidence="1">tRNA m6A37 methyltransferase</fullName>
    </alternativeName>
</protein>
<gene>
    <name evidence="1" type="primary">yfiC</name>
    <name type="ordered locus">Ecok1_25010</name>
    <name type="ORF">APECO1_3956</name>
</gene>
<accession>A1AEA5</accession>
<reference key="1">
    <citation type="journal article" date="2007" name="J. Bacteriol.">
        <title>The genome sequence of avian pathogenic Escherichia coli strain O1:K1:H7 shares strong similarities with human extraintestinal pathogenic E. coli genomes.</title>
        <authorList>
            <person name="Johnson T.J."/>
            <person name="Kariyawasam S."/>
            <person name="Wannemuehler Y."/>
            <person name="Mangiamele P."/>
            <person name="Johnson S.J."/>
            <person name="Doetkott C."/>
            <person name="Skyberg J.A."/>
            <person name="Lynne A.M."/>
            <person name="Johnson J.R."/>
            <person name="Nolan L.K."/>
        </authorList>
    </citation>
    <scope>NUCLEOTIDE SEQUENCE [LARGE SCALE GENOMIC DNA]</scope>
</reference>
<organism>
    <name type="scientific">Escherichia coli O1:K1 / APEC</name>
    <dbReference type="NCBI Taxonomy" id="405955"/>
    <lineage>
        <taxon>Bacteria</taxon>
        <taxon>Pseudomonadati</taxon>
        <taxon>Pseudomonadota</taxon>
        <taxon>Gammaproteobacteria</taxon>
        <taxon>Enterobacterales</taxon>
        <taxon>Enterobacteriaceae</taxon>
        <taxon>Escherichia</taxon>
    </lineage>
</organism>
<dbReference type="EC" id="2.1.1.223" evidence="1"/>
<dbReference type="EMBL" id="CP000468">
    <property type="protein sequence ID" value="ABJ01995.1"/>
    <property type="status" value="ALT_INIT"/>
    <property type="molecule type" value="Genomic_DNA"/>
</dbReference>
<dbReference type="SMR" id="A1AEA5"/>
<dbReference type="KEGG" id="ecv:APECO1_3956"/>
<dbReference type="HOGENOM" id="CLU_061983_0_0_6"/>
<dbReference type="Proteomes" id="UP000008216">
    <property type="component" value="Chromosome"/>
</dbReference>
<dbReference type="GO" id="GO:0005737">
    <property type="term" value="C:cytoplasm"/>
    <property type="evidence" value="ECO:0007669"/>
    <property type="project" value="UniProtKB-SubCell"/>
</dbReference>
<dbReference type="GO" id="GO:0003676">
    <property type="term" value="F:nucleic acid binding"/>
    <property type="evidence" value="ECO:0007669"/>
    <property type="project" value="InterPro"/>
</dbReference>
<dbReference type="GO" id="GO:0016430">
    <property type="term" value="F:tRNA (adenine-N6)-methyltransferase activity"/>
    <property type="evidence" value="ECO:0007669"/>
    <property type="project" value="UniProtKB-UniRule"/>
</dbReference>
<dbReference type="GO" id="GO:0032259">
    <property type="term" value="P:methylation"/>
    <property type="evidence" value="ECO:0007669"/>
    <property type="project" value="UniProtKB-KW"/>
</dbReference>
<dbReference type="GO" id="GO:0008033">
    <property type="term" value="P:tRNA processing"/>
    <property type="evidence" value="ECO:0007669"/>
    <property type="project" value="UniProtKB-UniRule"/>
</dbReference>
<dbReference type="CDD" id="cd02440">
    <property type="entry name" value="AdoMet_MTases"/>
    <property type="match status" value="1"/>
</dbReference>
<dbReference type="FunFam" id="3.40.50.150:FF:000087">
    <property type="entry name" value="tRNA1(Val) (adenine(37)-N6)-methyltransferase"/>
    <property type="match status" value="1"/>
</dbReference>
<dbReference type="Gene3D" id="3.40.50.150">
    <property type="entry name" value="Vaccinia Virus protein VP39"/>
    <property type="match status" value="1"/>
</dbReference>
<dbReference type="HAMAP" id="MF_01872">
    <property type="entry name" value="tRNA_methyltr_YfiC"/>
    <property type="match status" value="1"/>
</dbReference>
<dbReference type="InterPro" id="IPR002052">
    <property type="entry name" value="DNA_methylase_N6_adenine_CS"/>
</dbReference>
<dbReference type="InterPro" id="IPR029063">
    <property type="entry name" value="SAM-dependent_MTases_sf"/>
</dbReference>
<dbReference type="InterPro" id="IPR007848">
    <property type="entry name" value="Small_mtfrase_dom"/>
</dbReference>
<dbReference type="InterPro" id="IPR050210">
    <property type="entry name" value="tRNA_Adenine-N(6)_MTase"/>
</dbReference>
<dbReference type="InterPro" id="IPR022882">
    <property type="entry name" value="tRNA_adenine-N6_MeTrfase"/>
</dbReference>
<dbReference type="NCBIfam" id="NF047853">
    <property type="entry name" value="tRm6a37MtseTrmN"/>
    <property type="match status" value="1"/>
</dbReference>
<dbReference type="PANTHER" id="PTHR47739">
    <property type="entry name" value="TRNA1(VAL) (ADENINE(37)-N6)-METHYLTRANSFERASE"/>
    <property type="match status" value="1"/>
</dbReference>
<dbReference type="PANTHER" id="PTHR47739:SF1">
    <property type="entry name" value="TRNA1(VAL) (ADENINE(37)-N6)-METHYLTRANSFERASE"/>
    <property type="match status" value="1"/>
</dbReference>
<dbReference type="Pfam" id="PF05175">
    <property type="entry name" value="MTS"/>
    <property type="match status" value="1"/>
</dbReference>
<dbReference type="SUPFAM" id="SSF53335">
    <property type="entry name" value="S-adenosyl-L-methionine-dependent methyltransferases"/>
    <property type="match status" value="1"/>
</dbReference>
<dbReference type="PROSITE" id="PS00092">
    <property type="entry name" value="N6_MTASE"/>
    <property type="match status" value="1"/>
</dbReference>
<sequence length="245" mass="27273">MSQSTSVFRRNGFTFKQFFVAHDRCAMKVGTDGILLGAWAPVAGVKRCLDIGAGSGLLALMLAQRTDDSVMIDAVELESEAAAQAQENINQSPWAERINVHTADILQWITQQTVRFDLIISNPPYYQQGVECATPQREQARYTTTLDHPSLLTCAAECITEEGFFCVVLPEQIGNGFTELALSMGWHLRLRTDVAENEARLPHRVLLAFSPQAGECFSDRLVIRGPDQNYSEAYTALTQAFYLFM</sequence>